<dbReference type="EMBL" id="AM884177">
    <property type="protein sequence ID" value="CAP06962.1"/>
    <property type="molecule type" value="Genomic_DNA"/>
</dbReference>
<dbReference type="RefSeq" id="WP_009872553.1">
    <property type="nucleotide sequence ID" value="NC_010280.2"/>
</dbReference>
<dbReference type="SMR" id="B0BBU7"/>
<dbReference type="KEGG" id="ctl:CTLon_0564"/>
<dbReference type="HOGENOM" id="CLU_086499_3_0_0"/>
<dbReference type="Proteomes" id="UP001154401">
    <property type="component" value="Chromosome"/>
</dbReference>
<dbReference type="GO" id="GO:0022625">
    <property type="term" value="C:cytosolic large ribosomal subunit"/>
    <property type="evidence" value="ECO:0007669"/>
    <property type="project" value="TreeGrafter"/>
</dbReference>
<dbReference type="GO" id="GO:0003729">
    <property type="term" value="F:mRNA binding"/>
    <property type="evidence" value="ECO:0007669"/>
    <property type="project" value="TreeGrafter"/>
</dbReference>
<dbReference type="GO" id="GO:0003735">
    <property type="term" value="F:structural constituent of ribosome"/>
    <property type="evidence" value="ECO:0007669"/>
    <property type="project" value="InterPro"/>
</dbReference>
<dbReference type="GO" id="GO:0006412">
    <property type="term" value="P:translation"/>
    <property type="evidence" value="ECO:0007669"/>
    <property type="project" value="UniProtKB-UniRule"/>
</dbReference>
<dbReference type="CDD" id="cd00387">
    <property type="entry name" value="Ribosomal_L7_L12"/>
    <property type="match status" value="1"/>
</dbReference>
<dbReference type="FunFam" id="1.20.5.710:FF:000007">
    <property type="entry name" value="50S ribosomal protein L7/L12"/>
    <property type="match status" value="1"/>
</dbReference>
<dbReference type="FunFam" id="3.30.1390.10:FF:000001">
    <property type="entry name" value="50S ribosomal protein L7/L12"/>
    <property type="match status" value="1"/>
</dbReference>
<dbReference type="Gene3D" id="3.30.1390.10">
    <property type="match status" value="1"/>
</dbReference>
<dbReference type="Gene3D" id="1.20.5.710">
    <property type="entry name" value="Single helix bin"/>
    <property type="match status" value="1"/>
</dbReference>
<dbReference type="HAMAP" id="MF_00368">
    <property type="entry name" value="Ribosomal_bL12"/>
    <property type="match status" value="1"/>
</dbReference>
<dbReference type="InterPro" id="IPR000206">
    <property type="entry name" value="Ribosomal_bL12"/>
</dbReference>
<dbReference type="InterPro" id="IPR013823">
    <property type="entry name" value="Ribosomal_bL12_C"/>
</dbReference>
<dbReference type="InterPro" id="IPR014719">
    <property type="entry name" value="Ribosomal_bL12_C/ClpS-like"/>
</dbReference>
<dbReference type="InterPro" id="IPR008932">
    <property type="entry name" value="Ribosomal_bL12_oligo"/>
</dbReference>
<dbReference type="InterPro" id="IPR036235">
    <property type="entry name" value="Ribosomal_bL12_oligo_N_sf"/>
</dbReference>
<dbReference type="NCBIfam" id="TIGR00855">
    <property type="entry name" value="L12"/>
    <property type="match status" value="1"/>
</dbReference>
<dbReference type="PANTHER" id="PTHR45987">
    <property type="entry name" value="39S RIBOSOMAL PROTEIN L12"/>
    <property type="match status" value="1"/>
</dbReference>
<dbReference type="PANTHER" id="PTHR45987:SF4">
    <property type="entry name" value="LARGE RIBOSOMAL SUBUNIT PROTEIN BL12M"/>
    <property type="match status" value="1"/>
</dbReference>
<dbReference type="Pfam" id="PF00542">
    <property type="entry name" value="Ribosomal_L12"/>
    <property type="match status" value="1"/>
</dbReference>
<dbReference type="Pfam" id="PF16320">
    <property type="entry name" value="Ribosomal_L12_N"/>
    <property type="match status" value="1"/>
</dbReference>
<dbReference type="SUPFAM" id="SSF54736">
    <property type="entry name" value="ClpS-like"/>
    <property type="match status" value="1"/>
</dbReference>
<dbReference type="SUPFAM" id="SSF48300">
    <property type="entry name" value="Ribosomal protein L7/12, oligomerisation (N-terminal) domain"/>
    <property type="match status" value="1"/>
</dbReference>
<keyword id="KW-0687">Ribonucleoprotein</keyword>
<keyword id="KW-0689">Ribosomal protein</keyword>
<accession>B0BBU7</accession>
<organism>
    <name type="scientific">Chlamydia trachomatis serovar L2b (strain UCH-1/proctitis)</name>
    <dbReference type="NCBI Taxonomy" id="471473"/>
    <lineage>
        <taxon>Bacteria</taxon>
        <taxon>Pseudomonadati</taxon>
        <taxon>Chlamydiota</taxon>
        <taxon>Chlamydiia</taxon>
        <taxon>Chlamydiales</taxon>
        <taxon>Chlamydiaceae</taxon>
        <taxon>Chlamydia/Chlamydophila group</taxon>
        <taxon>Chlamydia</taxon>
    </lineage>
</organism>
<protein>
    <recommendedName>
        <fullName evidence="1">Large ribosomal subunit protein bL12</fullName>
    </recommendedName>
    <alternativeName>
        <fullName evidence="2">50S ribosomal protein L7/L12</fullName>
    </alternativeName>
</protein>
<name>RL7_CHLTB</name>
<gene>
    <name evidence="1" type="primary">rplL</name>
    <name type="ordered locus">CTLon_0564</name>
</gene>
<sequence>MTTESLETLVEQLSGLTVLELSQLKKLLEEKWDVTAAAPVVAVAGAAAAGDAPASAEPTEFAVILEDVPSDKKIGVLKVVREVTGLALKEAKEMTEGLPKTVKEKTSKSDAEDTVKKLQEAGAKAVAKGL</sequence>
<evidence type="ECO:0000255" key="1">
    <source>
        <dbReference type="HAMAP-Rule" id="MF_00368"/>
    </source>
</evidence>
<evidence type="ECO:0000305" key="2"/>
<comment type="function">
    <text evidence="1">Forms part of the ribosomal stalk which helps the ribosome interact with GTP-bound translation factors. Is thus essential for accurate translation.</text>
</comment>
<comment type="subunit">
    <text evidence="1">Homodimer. Part of the ribosomal stalk of the 50S ribosomal subunit. Forms a multimeric L10(L12)X complex, where L10 forms an elongated spine to which 2 to 4 L12 dimers bind in a sequential fashion. Binds GTP-bound translation factors.</text>
</comment>
<comment type="similarity">
    <text evidence="1">Belongs to the bacterial ribosomal protein bL12 family.</text>
</comment>
<reference key="1">
    <citation type="journal article" date="2008" name="Genome Res.">
        <title>Chlamydia trachomatis: genome sequence analysis of lymphogranuloma venereum isolates.</title>
        <authorList>
            <person name="Thomson N.R."/>
            <person name="Holden M.T.G."/>
            <person name="Carder C."/>
            <person name="Lennard N."/>
            <person name="Lockey S.J."/>
            <person name="Marsh P."/>
            <person name="Skipp P."/>
            <person name="O'Connor C.D."/>
            <person name="Goodhead I."/>
            <person name="Norbertzcak H."/>
            <person name="Harris B."/>
            <person name="Ormond D."/>
            <person name="Rance R."/>
            <person name="Quail M.A."/>
            <person name="Parkhill J."/>
            <person name="Stephens R.S."/>
            <person name="Clarke I.N."/>
        </authorList>
    </citation>
    <scope>NUCLEOTIDE SEQUENCE [LARGE SCALE GENOMIC DNA]</scope>
    <source>
        <strain>UCH-1/proctitis</strain>
    </source>
</reference>
<proteinExistence type="inferred from homology"/>
<feature type="chain" id="PRO_1000121413" description="Large ribosomal subunit protein bL12">
    <location>
        <begin position="1"/>
        <end position="130"/>
    </location>
</feature>